<evidence type="ECO:0000256" key="1">
    <source>
        <dbReference type="SAM" id="MobiDB-lite"/>
    </source>
</evidence>
<evidence type="ECO:0000269" key="2">
    <source>
    </source>
</evidence>
<evidence type="ECO:0000305" key="3"/>
<feature type="chain" id="PRO_0000065015" description="Bud site selection protein 3 homolog">
    <location>
        <begin position="1"/>
        <end position="1478"/>
    </location>
</feature>
<feature type="region of interest" description="Disordered" evidence="1">
    <location>
        <begin position="732"/>
        <end position="889"/>
    </location>
</feature>
<feature type="region of interest" description="Disordered" evidence="1">
    <location>
        <begin position="1085"/>
        <end position="1106"/>
    </location>
</feature>
<feature type="region of interest" description="Disordered" evidence="1">
    <location>
        <begin position="1146"/>
        <end position="1168"/>
    </location>
</feature>
<feature type="compositionally biased region" description="Polar residues" evidence="1">
    <location>
        <begin position="749"/>
        <end position="761"/>
    </location>
</feature>
<feature type="compositionally biased region" description="Low complexity" evidence="1">
    <location>
        <begin position="763"/>
        <end position="777"/>
    </location>
</feature>
<feature type="compositionally biased region" description="Polar residues" evidence="1">
    <location>
        <begin position="786"/>
        <end position="800"/>
    </location>
</feature>
<feature type="compositionally biased region" description="Basic and acidic residues" evidence="1">
    <location>
        <begin position="1146"/>
        <end position="1160"/>
    </location>
</feature>
<feature type="sequence conflict" description="In Ref. 1; AAG41242." evidence="3" ref="1">
    <original>D</original>
    <variation>N</variation>
    <location>
        <position position="144"/>
    </location>
</feature>
<sequence>MLTAKQDEVGRELRVATGTSLIEYPVKDWLLRRQPTEWEALLGEAAIFSGQDELLWGPFVACVYREPRTTRLNCLFMDRIGVMHLHSVDVSDTSRFYPAVENLRPEYRTQVVRRCLAVGLLKKYVLLDPSAVRLIRAELPYDYDQTTAGDLANTCELVEGQAARDVGQLLVRLGLVQPRHVRSLMLDVVYENHADVVDANNKLVYYLGEQLEQLFDPLTEYSPEPTELSYRVPDQVRTSLSDEMPLMVSICEELLQLQTNFTLSLVGFLQKFLIPLRIKALNEQVPGLSTVKLNNIFPPTIDEVTRINCIFLDALKAALPYGSLEVLKACSITAPYFYKAYTRHEAATKFFSRDIKSFLSTFGKSLSDLNFYSEIKLDTLIHGPQEKLTKLKLIIDRLFDSKDWETNEEQKEADRCYRSICDVIDSFGKDEPPNTYDTRVFTPSGKILTELAKGWPAELQYKWLKRRVVGVFDVISVTDPESRDIVVIFSDYIVFLHVINGNLYYSGDSKKPLISDVLMNSLINEVPLPPKIPKLEVLSHSYIDDVVVSTYGKNSLRFDTLNAERPSSVAYTLASSSVEASYVADLCTKARILEKDTAFHLFKTAIDSFHVYSTAHESEAYKTERIKSPFVLFLNIPDSIGALQDHNATVGLFASLNKNDKVTLVRLGLDGSREESFASLDNFLSLIIEELLIFYPSYLSSATSPLFQQLMQINEQLVQTLLDPKGVHSASKSKCALRTSKKKKMPANLVSTNDNSRTLSPGTIISRTPRTISTITPKQEKRKSVGQASNSPARGSISTTPRKHKRESILGKISGLFHKKDKKENKRNSVGSDTRNRHDNGSVHILRNSSSSFRELESPRQMKRFSSVVHTAVPSSSKRRTSGISPSKGTVNLRALQDAENDDNADISKIPIPEGESLFDDTIRVDGVDADFYAQKDRLSKIYNHDLYGEVVPSAPGSKNVNVVSGATREQEKQQNTQKAIARELLASVDQQKRQPTHSAPAESQIVIPGLPQSNVPQINFGRSPSFIELFGGMRLVLDENDESVNWRRLCSERSLNEKYQIRPATYAGCISGELAPPVGIISDQRDSNLSGDNDADTPLPMHSSNKSILSDETLEKGEFERDFAISTPKSQTVSDVNARRETWGYSHSHDEEIDSEKRANTKPVSAPAPNVIPGLIITANSPTKPWHKENTRIKVSDVRSEGTDVSYISSLKKSSNRLVELSVNSQEDFEDERHTPVIEPIQNPEAPSLIENTETAPVASNSSNEETLSKLLGSQGVIDLTEETIDYSSINRKHASIQTAYPVLDDVEFSTFHMSFGDMKAEDSHLANQRESYLFSNSTIAGKKDESHGPVFYKLPDFVADDSYLGYSAVDQHAKHERNTEIGEEDEAMWVSPSKLDIFDLSKQPESVYKRTSIPAKHAELLSKMRKDGSVKFEESMFIRDNSYVYLGQFLSADEVIEQQDKKLAANTDEMDSARRL</sequence>
<name>BUD3_EREGS</name>
<keyword id="KW-0131">Cell cycle</keyword>
<keyword id="KW-0132">Cell division</keyword>
<keyword id="KW-1185">Reference proteome</keyword>
<organism>
    <name type="scientific">Eremothecium gossypii (strain ATCC 10895 / CBS 109.51 / FGSC 9923 / NRRL Y-1056)</name>
    <name type="common">Yeast</name>
    <name type="synonym">Ashbya gossypii</name>
    <dbReference type="NCBI Taxonomy" id="284811"/>
    <lineage>
        <taxon>Eukaryota</taxon>
        <taxon>Fungi</taxon>
        <taxon>Dikarya</taxon>
        <taxon>Ascomycota</taxon>
        <taxon>Saccharomycotina</taxon>
        <taxon>Saccharomycetes</taxon>
        <taxon>Saccharomycetales</taxon>
        <taxon>Saccharomycetaceae</taxon>
        <taxon>Eremothecium</taxon>
    </lineage>
</organism>
<accession>Q9HF61</accession>
<accession>Q75EV2</accession>
<protein>
    <recommendedName>
        <fullName>Bud site selection protein 3 homolog</fullName>
    </recommendedName>
</protein>
<dbReference type="EMBL" id="AF210625">
    <property type="protein sequence ID" value="AAG41242.1"/>
    <property type="molecule type" value="Genomic_DNA"/>
</dbReference>
<dbReference type="EMBL" id="AE016814">
    <property type="protein sequence ID" value="AAS50350.1"/>
    <property type="molecule type" value="Genomic_DNA"/>
</dbReference>
<dbReference type="RefSeq" id="NP_982526.1">
    <property type="nucleotide sequence ID" value="NM_207879.1"/>
</dbReference>
<dbReference type="FunCoup" id="Q9HF61">
    <property type="interactions" value="168"/>
</dbReference>
<dbReference type="STRING" id="284811.Q9HF61"/>
<dbReference type="EnsemblFungi" id="AAS50350">
    <property type="protein sequence ID" value="AAS50350"/>
    <property type="gene ID" value="AGOS_AAL016C"/>
</dbReference>
<dbReference type="GeneID" id="4618640"/>
<dbReference type="KEGG" id="ago:AGOS_AAL016C"/>
<dbReference type="eggNOG" id="ENOG502QSNK">
    <property type="taxonomic scope" value="Eukaryota"/>
</dbReference>
<dbReference type="HOGENOM" id="CLU_001458_0_0_1"/>
<dbReference type="InParanoid" id="Q9HF61"/>
<dbReference type="OMA" id="VELQYKW"/>
<dbReference type="OrthoDB" id="4066896at2759"/>
<dbReference type="Proteomes" id="UP000000591">
    <property type="component" value="Chromosome I"/>
</dbReference>
<dbReference type="GO" id="GO:0030428">
    <property type="term" value="C:cell septum"/>
    <property type="evidence" value="ECO:0007669"/>
    <property type="project" value="UniProtKB-SubCell"/>
</dbReference>
<dbReference type="GO" id="GO:0051286">
    <property type="term" value="C:cell tip"/>
    <property type="evidence" value="ECO:0007669"/>
    <property type="project" value="UniProtKB-SubCell"/>
</dbReference>
<dbReference type="GO" id="GO:0000142">
    <property type="term" value="C:cellular bud neck contractile ring"/>
    <property type="evidence" value="ECO:0007669"/>
    <property type="project" value="EnsemblFungi"/>
</dbReference>
<dbReference type="GO" id="GO:0005085">
    <property type="term" value="F:guanyl-nucleotide exchange factor activity"/>
    <property type="evidence" value="ECO:0007669"/>
    <property type="project" value="EnsemblFungi"/>
</dbReference>
<dbReference type="GO" id="GO:0007120">
    <property type="term" value="P:axial cellular bud site selection"/>
    <property type="evidence" value="ECO:0007669"/>
    <property type="project" value="EnsemblFungi"/>
</dbReference>
<dbReference type="GO" id="GO:0000755">
    <property type="term" value="P:cytogamy"/>
    <property type="evidence" value="ECO:0007669"/>
    <property type="project" value="EnsemblFungi"/>
</dbReference>
<dbReference type="Gene3D" id="1.20.900.10">
    <property type="entry name" value="Dbl homology (DH) domain"/>
    <property type="match status" value="1"/>
</dbReference>
<dbReference type="InterPro" id="IPR021895">
    <property type="entry name" value="Bud3_N"/>
</dbReference>
<dbReference type="InterPro" id="IPR035899">
    <property type="entry name" value="DBL_dom_sf"/>
</dbReference>
<dbReference type="InterPro" id="IPR000219">
    <property type="entry name" value="DH_dom"/>
</dbReference>
<dbReference type="Pfam" id="PF12015">
    <property type="entry name" value="Bud3_N"/>
    <property type="match status" value="1"/>
</dbReference>
<dbReference type="Pfam" id="PF25351">
    <property type="entry name" value="PH_BUD3_C"/>
    <property type="match status" value="1"/>
</dbReference>
<dbReference type="SMART" id="SM00325">
    <property type="entry name" value="RhoGEF"/>
    <property type="match status" value="1"/>
</dbReference>
<dbReference type="SUPFAM" id="SSF48065">
    <property type="entry name" value="DBL homology domain (DH-domain)"/>
    <property type="match status" value="1"/>
</dbReference>
<dbReference type="PROSITE" id="PS50010">
    <property type="entry name" value="DH_2"/>
    <property type="match status" value="1"/>
</dbReference>
<reference key="1">
    <citation type="submission" date="1999-12" db="EMBL/GenBank/DDBJ databases">
        <title>Sequence of chromosome III intergenic region between BUD3 and GBP2 including previously unidentified gene, which is the ortholog of YCL012C in Saccharomyces cerevisiae.</title>
        <authorList>
            <person name="Dietrich F.S."/>
            <person name="Voegeli S."/>
            <person name="Rebischung C."/>
            <person name="Mohr C."/>
            <person name="Gaffney T.D."/>
            <person name="Philippsen P."/>
        </authorList>
    </citation>
    <scope>NUCLEOTIDE SEQUENCE [GENOMIC DNA]</scope>
    <source>
        <strain>ATCC 10895 / CBS 109.51 / FGSC 9923 / NRRL Y-1056</strain>
    </source>
</reference>
<reference key="2">
    <citation type="journal article" date="2004" name="Science">
        <title>The Ashbya gossypii genome as a tool for mapping the ancient Saccharomyces cerevisiae genome.</title>
        <authorList>
            <person name="Dietrich F.S."/>
            <person name="Voegeli S."/>
            <person name="Brachat S."/>
            <person name="Lerch A."/>
            <person name="Gates K."/>
            <person name="Steiner S."/>
            <person name="Mohr C."/>
            <person name="Poehlmann R."/>
            <person name="Luedi P."/>
            <person name="Choi S."/>
            <person name="Wing R.A."/>
            <person name="Flavier A."/>
            <person name="Gaffney T.D."/>
            <person name="Philippsen P."/>
        </authorList>
    </citation>
    <scope>NUCLEOTIDE SEQUENCE [LARGE SCALE GENOMIC DNA]</scope>
    <source>
        <strain>ATCC 10895 / CBS 109.51 / FGSC 9923 / NRRL Y-1056</strain>
    </source>
</reference>
<reference key="3">
    <citation type="journal article" date="2013" name="G3 (Bethesda)">
        <title>Genomes of Ashbya fungi isolated from insects reveal four mating-type loci, numerous translocations, lack of transposons, and distinct gene duplications.</title>
        <authorList>
            <person name="Dietrich F.S."/>
            <person name="Voegeli S."/>
            <person name="Kuo S."/>
            <person name="Philippsen P."/>
        </authorList>
    </citation>
    <scope>GENOME REANNOTATION</scope>
    <source>
        <strain>ATCC 10895 / CBS 109.51 / FGSC 9923 / NRRL Y-1056</strain>
    </source>
</reference>
<reference key="4">
    <citation type="journal article" date="2003" name="EMBO Rep.">
        <title>Analysis of the landmark protein Bud3 of Ashbya gossypii reveals a novel role in septum construction.</title>
        <authorList>
            <person name="Wendland J."/>
        </authorList>
    </citation>
    <scope>FUNCTION</scope>
    <scope>SUBCELLULAR LOCATION</scope>
</reference>
<gene>
    <name type="primary">BUD3</name>
    <name type="ordered locus">AAL016C</name>
</gene>
<proteinExistence type="inferred from homology"/>
<comment type="function">
    <text evidence="2">Required for proper septum positioning and septum construction during septation. Acts as a landmark to mark sites for future septation, and as part of a scaffold that recruits components of the contractile ring to the site of septation. Not required to determine the site of lateral branch formation.</text>
</comment>
<comment type="subcellular location">
    <subcellularLocation>
        <location evidence="2">Cell tip</location>
    </subcellularLocation>
    <subcellularLocation>
        <location evidence="2">Cell septum</location>
    </subcellularLocation>
    <text>Localizes close to the hyphal tip and transiently localizes to septal sites. Initially forms a single ring which subsequently splits into two distinct rings as the septum forms, and disappears after septum completion.</text>
</comment>
<comment type="similarity">
    <text evidence="3">Belongs to the BUD3 family.</text>
</comment>